<protein>
    <recommendedName>
        <fullName>Disease resistance response protein DRRG49-C</fullName>
    </recommendedName>
</protein>
<sequence length="158" mass="16791">MGVFNFEEEATSIVAPATLHKALVTDADILTPKVIDAIKSIEIVEGNGGPGTIKKLTFVEDGETKYVLHKVELVDDANWANNYSIVGGVGLPDTVEKISFEAKLSAGPNGGSIAKLSVKYYTKGDAIPSEEEIKNGKAKGEGIFKALEGYCVANPDYN</sequence>
<evidence type="ECO:0000305" key="1"/>
<comment type="induction">
    <text>Upon contact with the plant pathogens fungus Fusarium solani.</text>
</comment>
<comment type="similarity">
    <text evidence="1">Belongs to the BetVI family.</text>
</comment>
<accession>P27047</accession>
<reference key="1">
    <citation type="journal article" date="1990" name="Mol. Plant Microbe Interact.">
        <title>Cloning and characterization of a disease resistance response gene in pea inducible by Fusarium solani.</title>
        <authorList>
            <person name="Chiang C.C."/>
            <person name="Hadwiger L.A."/>
        </authorList>
    </citation>
    <scope>NUCLEOTIDE SEQUENCE [GENOMIC DNA]</scope>
    <source>
        <strain>cv. Alaska</strain>
    </source>
</reference>
<feature type="chain" id="PRO_0000154167" description="Disease resistance response protein DRRG49-C">
    <location>
        <begin position="1"/>
        <end position="158"/>
    </location>
</feature>
<proteinExistence type="evidence at transcript level"/>
<keyword id="KW-0568">Pathogenesis-related protein</keyword>
<keyword id="KW-0611">Plant defense</keyword>
<name>DRR4_PEA</name>
<organism>
    <name type="scientific">Pisum sativum</name>
    <name type="common">Garden pea</name>
    <name type="synonym">Lathyrus oleraceus</name>
    <dbReference type="NCBI Taxonomy" id="3888"/>
    <lineage>
        <taxon>Eukaryota</taxon>
        <taxon>Viridiplantae</taxon>
        <taxon>Streptophyta</taxon>
        <taxon>Embryophyta</taxon>
        <taxon>Tracheophyta</taxon>
        <taxon>Spermatophyta</taxon>
        <taxon>Magnoliopsida</taxon>
        <taxon>eudicotyledons</taxon>
        <taxon>Gunneridae</taxon>
        <taxon>Pentapetalae</taxon>
        <taxon>rosids</taxon>
        <taxon>fabids</taxon>
        <taxon>Fabales</taxon>
        <taxon>Fabaceae</taxon>
        <taxon>Papilionoideae</taxon>
        <taxon>50 kb inversion clade</taxon>
        <taxon>NPAAA clade</taxon>
        <taxon>Hologalegina</taxon>
        <taxon>IRL clade</taxon>
        <taxon>Fabeae</taxon>
        <taxon>Pisum</taxon>
    </lineage>
</organism>
<dbReference type="EMBL" id="J03680">
    <property type="protein sequence ID" value="AAA33663.1"/>
    <property type="molecule type" value="Genomic_DNA"/>
</dbReference>
<dbReference type="RefSeq" id="NP_001413757.1">
    <property type="nucleotide sequence ID" value="NM_001426828.1"/>
</dbReference>
<dbReference type="SMR" id="P27047"/>
<dbReference type="EnsemblPlants" id="Psat1g157160.1">
    <property type="protein sequence ID" value="Psat1g157160.1.cds"/>
    <property type="gene ID" value="Psat1g157160"/>
</dbReference>
<dbReference type="GeneID" id="127073632"/>
<dbReference type="Gramene" id="Psat1g157160.1">
    <property type="protein sequence ID" value="Psat1g157160.1.cds"/>
    <property type="gene ID" value="Psat1g157160"/>
</dbReference>
<dbReference type="OrthoDB" id="1858506at2759"/>
<dbReference type="GO" id="GO:0005737">
    <property type="term" value="C:cytoplasm"/>
    <property type="evidence" value="ECO:0007669"/>
    <property type="project" value="TreeGrafter"/>
</dbReference>
<dbReference type="GO" id="GO:0005634">
    <property type="term" value="C:nucleus"/>
    <property type="evidence" value="ECO:0007669"/>
    <property type="project" value="TreeGrafter"/>
</dbReference>
<dbReference type="GO" id="GO:0010427">
    <property type="term" value="F:abscisic acid binding"/>
    <property type="evidence" value="ECO:0007669"/>
    <property type="project" value="InterPro"/>
</dbReference>
<dbReference type="GO" id="GO:0004864">
    <property type="term" value="F:protein phosphatase inhibitor activity"/>
    <property type="evidence" value="ECO:0007669"/>
    <property type="project" value="InterPro"/>
</dbReference>
<dbReference type="GO" id="GO:0038023">
    <property type="term" value="F:signaling receptor activity"/>
    <property type="evidence" value="ECO:0007669"/>
    <property type="project" value="InterPro"/>
</dbReference>
<dbReference type="GO" id="GO:0009738">
    <property type="term" value="P:abscisic acid-activated signaling pathway"/>
    <property type="evidence" value="ECO:0007669"/>
    <property type="project" value="InterPro"/>
</dbReference>
<dbReference type="GO" id="GO:0006952">
    <property type="term" value="P:defense response"/>
    <property type="evidence" value="ECO:0007669"/>
    <property type="project" value="UniProtKB-KW"/>
</dbReference>
<dbReference type="CDD" id="cd07816">
    <property type="entry name" value="Bet_v1-like"/>
    <property type="match status" value="1"/>
</dbReference>
<dbReference type="FunFam" id="3.30.530.20:FF:000007">
    <property type="entry name" value="Major pollen allergen Bet v 1-A"/>
    <property type="match status" value="1"/>
</dbReference>
<dbReference type="Gene3D" id="3.30.530.20">
    <property type="match status" value="1"/>
</dbReference>
<dbReference type="InterPro" id="IPR000916">
    <property type="entry name" value="Bet_v_I/MLP"/>
</dbReference>
<dbReference type="InterPro" id="IPR024949">
    <property type="entry name" value="Bet_v_I_allergen"/>
</dbReference>
<dbReference type="InterPro" id="IPR050279">
    <property type="entry name" value="Plant_def-hormone_signal"/>
</dbReference>
<dbReference type="InterPro" id="IPR023393">
    <property type="entry name" value="START-like_dom_sf"/>
</dbReference>
<dbReference type="PANTHER" id="PTHR31213">
    <property type="entry name" value="OS08G0374000 PROTEIN-RELATED"/>
    <property type="match status" value="1"/>
</dbReference>
<dbReference type="PANTHER" id="PTHR31213:SF55">
    <property type="entry name" value="STRESS-INDUCED PROTEIN SAM22"/>
    <property type="match status" value="1"/>
</dbReference>
<dbReference type="Pfam" id="PF00407">
    <property type="entry name" value="Bet_v_1"/>
    <property type="match status" value="1"/>
</dbReference>
<dbReference type="PRINTS" id="PR00634">
    <property type="entry name" value="BETALLERGEN"/>
</dbReference>
<dbReference type="SUPFAM" id="SSF55961">
    <property type="entry name" value="Bet v1-like"/>
    <property type="match status" value="1"/>
</dbReference>
<dbReference type="PROSITE" id="PS00451">
    <property type="entry name" value="PATHOGENESIS_BETVI"/>
    <property type="match status" value="1"/>
</dbReference>